<dbReference type="EC" id="6.3.5.-" evidence="1"/>
<dbReference type="EMBL" id="AM408590">
    <property type="protein sequence ID" value="CAL73020.1"/>
    <property type="molecule type" value="Genomic_DNA"/>
</dbReference>
<dbReference type="RefSeq" id="WP_003415248.1">
    <property type="nucleotide sequence ID" value="NC_008769.1"/>
</dbReference>
<dbReference type="SMR" id="A1KN04"/>
<dbReference type="KEGG" id="mbb:BCG_3031c"/>
<dbReference type="HOGENOM" id="CLU_019240_0_0_11"/>
<dbReference type="Proteomes" id="UP000001472">
    <property type="component" value="Chromosome"/>
</dbReference>
<dbReference type="GO" id="GO:0050566">
    <property type="term" value="F:asparaginyl-tRNA synthase (glutamine-hydrolyzing) activity"/>
    <property type="evidence" value="ECO:0007669"/>
    <property type="project" value="RHEA"/>
</dbReference>
<dbReference type="GO" id="GO:0005524">
    <property type="term" value="F:ATP binding"/>
    <property type="evidence" value="ECO:0007669"/>
    <property type="project" value="UniProtKB-KW"/>
</dbReference>
<dbReference type="GO" id="GO:0050567">
    <property type="term" value="F:glutaminyl-tRNA synthase (glutamine-hydrolyzing) activity"/>
    <property type="evidence" value="ECO:0007669"/>
    <property type="project" value="UniProtKB-UniRule"/>
</dbReference>
<dbReference type="GO" id="GO:0070681">
    <property type="term" value="P:glutaminyl-tRNAGln biosynthesis via transamidation"/>
    <property type="evidence" value="ECO:0007669"/>
    <property type="project" value="TreeGrafter"/>
</dbReference>
<dbReference type="GO" id="GO:0006412">
    <property type="term" value="P:translation"/>
    <property type="evidence" value="ECO:0007669"/>
    <property type="project" value="UniProtKB-UniRule"/>
</dbReference>
<dbReference type="FunFam" id="1.10.10.410:FF:000002">
    <property type="entry name" value="Aspartyl/glutamyl-tRNA(Asn/Gln) amidotransferase subunit B"/>
    <property type="match status" value="1"/>
</dbReference>
<dbReference type="Gene3D" id="1.10.10.410">
    <property type="match status" value="1"/>
</dbReference>
<dbReference type="HAMAP" id="MF_00121">
    <property type="entry name" value="GatB"/>
    <property type="match status" value="1"/>
</dbReference>
<dbReference type="InterPro" id="IPR017959">
    <property type="entry name" value="Asn/Gln-tRNA_amidoTrfase_suB/E"/>
</dbReference>
<dbReference type="InterPro" id="IPR006075">
    <property type="entry name" value="Asn/Gln-tRNA_Trfase_suB/E_cat"/>
</dbReference>
<dbReference type="InterPro" id="IPR018027">
    <property type="entry name" value="Asn/Gln_amidotransferase"/>
</dbReference>
<dbReference type="InterPro" id="IPR003789">
    <property type="entry name" value="Asn/Gln_tRNA_amidoTrase-B-like"/>
</dbReference>
<dbReference type="InterPro" id="IPR004413">
    <property type="entry name" value="GatB"/>
</dbReference>
<dbReference type="InterPro" id="IPR023168">
    <property type="entry name" value="GatB_Yqey_C_2"/>
</dbReference>
<dbReference type="InterPro" id="IPR017958">
    <property type="entry name" value="Gln-tRNA_amidoTrfase_suB_CS"/>
</dbReference>
<dbReference type="InterPro" id="IPR014746">
    <property type="entry name" value="Gln_synth/guanido_kin_cat_dom"/>
</dbReference>
<dbReference type="NCBIfam" id="TIGR00133">
    <property type="entry name" value="gatB"/>
    <property type="match status" value="1"/>
</dbReference>
<dbReference type="NCBIfam" id="NF004012">
    <property type="entry name" value="PRK05477.1-2"/>
    <property type="match status" value="1"/>
</dbReference>
<dbReference type="NCBIfam" id="NF004013">
    <property type="entry name" value="PRK05477.1-3"/>
    <property type="match status" value="1"/>
</dbReference>
<dbReference type="NCBIfam" id="NF004014">
    <property type="entry name" value="PRK05477.1-4"/>
    <property type="match status" value="1"/>
</dbReference>
<dbReference type="PANTHER" id="PTHR11659">
    <property type="entry name" value="GLUTAMYL-TRNA GLN AMIDOTRANSFERASE SUBUNIT B MITOCHONDRIAL AND PROKARYOTIC PET112-RELATED"/>
    <property type="match status" value="1"/>
</dbReference>
<dbReference type="PANTHER" id="PTHR11659:SF0">
    <property type="entry name" value="GLUTAMYL-TRNA(GLN) AMIDOTRANSFERASE SUBUNIT B, MITOCHONDRIAL"/>
    <property type="match status" value="1"/>
</dbReference>
<dbReference type="Pfam" id="PF02934">
    <property type="entry name" value="GatB_N"/>
    <property type="match status" value="1"/>
</dbReference>
<dbReference type="Pfam" id="PF02637">
    <property type="entry name" value="GatB_Yqey"/>
    <property type="match status" value="1"/>
</dbReference>
<dbReference type="SMART" id="SM00845">
    <property type="entry name" value="GatB_Yqey"/>
    <property type="match status" value="1"/>
</dbReference>
<dbReference type="SUPFAM" id="SSF89095">
    <property type="entry name" value="GatB/YqeY motif"/>
    <property type="match status" value="1"/>
</dbReference>
<dbReference type="SUPFAM" id="SSF55931">
    <property type="entry name" value="Glutamine synthetase/guanido kinase"/>
    <property type="match status" value="1"/>
</dbReference>
<dbReference type="PROSITE" id="PS01234">
    <property type="entry name" value="GATB"/>
    <property type="match status" value="1"/>
</dbReference>
<keyword id="KW-0067">ATP-binding</keyword>
<keyword id="KW-0436">Ligase</keyword>
<keyword id="KW-0547">Nucleotide-binding</keyword>
<keyword id="KW-0648">Protein biosynthesis</keyword>
<sequence>MTVAAGAAKAAGAELLDYDEVVARFQPVLGLEVHVELSTATKMFCGCTTTFGGEPNTQVCPVCLGLPGSLPVLNRAAVESAIRIGLALNCEIVPWCRFARKNYFYPDMPKNYQISQYDEPIAINGYLDAPLEDGTTWRVEIERAHMEEDTGKLTHIGSETGRIHGATGSLIDYNRAGVPLIEIVTKPIVGAGARAPQIARSYVTALRDLLRALDVSDVRMDQGSMRCDANVSLKPAGTTEFGTRTETKNVNSLKSVEVAVRYEMQRQGAILASGGRITQETRHFHEAGYTSAGRTKETAEDYRYFPEPDLEPVAPSRELVERLRQTIPELPWLSRRRIQQEWGVSDEVMRDLVNAGAVELVAATVEHGASSEAARAWWGNFLAQKANEAGIGLDELAITPAQVAAVVALVDEGKLSNSLARQVVEGVLAGEGEPEQVMTARGLALVRDDSLTQAAVDEALAANPDVADKIRGGKVAAAGAIVGAVMKATRGQADAARVRELVLEACGQG</sequence>
<reference key="1">
    <citation type="journal article" date="2007" name="Proc. Natl. Acad. Sci. U.S.A.">
        <title>Genome plasticity of BCG and impact on vaccine efficacy.</title>
        <authorList>
            <person name="Brosch R."/>
            <person name="Gordon S.V."/>
            <person name="Garnier T."/>
            <person name="Eiglmeier K."/>
            <person name="Frigui W."/>
            <person name="Valenti P."/>
            <person name="Dos Santos S."/>
            <person name="Duthoy S."/>
            <person name="Lacroix C."/>
            <person name="Garcia-Pelayo C."/>
            <person name="Inwald J.K."/>
            <person name="Golby P."/>
            <person name="Garcia J.N."/>
            <person name="Hewinson R.G."/>
            <person name="Behr M.A."/>
            <person name="Quail M.A."/>
            <person name="Churcher C."/>
            <person name="Barrell B.G."/>
            <person name="Parkhill J."/>
            <person name="Cole S.T."/>
        </authorList>
    </citation>
    <scope>NUCLEOTIDE SEQUENCE [LARGE SCALE GENOMIC DNA]</scope>
    <source>
        <strain>BCG / Pasteur 1173P2</strain>
    </source>
</reference>
<organism>
    <name type="scientific">Mycobacterium bovis (strain BCG / Pasteur 1173P2)</name>
    <dbReference type="NCBI Taxonomy" id="410289"/>
    <lineage>
        <taxon>Bacteria</taxon>
        <taxon>Bacillati</taxon>
        <taxon>Actinomycetota</taxon>
        <taxon>Actinomycetes</taxon>
        <taxon>Mycobacteriales</taxon>
        <taxon>Mycobacteriaceae</taxon>
        <taxon>Mycobacterium</taxon>
        <taxon>Mycobacterium tuberculosis complex</taxon>
    </lineage>
</organism>
<accession>A1KN04</accession>
<gene>
    <name evidence="1" type="primary">gatB</name>
    <name type="ordered locus">BCG_3031c</name>
</gene>
<proteinExistence type="inferred from homology"/>
<name>GATB_MYCBP</name>
<comment type="function">
    <text evidence="1">Allows the formation of correctly charged Asn-tRNA(Asn) or Gln-tRNA(Gln) through the transamidation of misacylated Asp-tRNA(Asn) or Glu-tRNA(Gln) in organisms which lack either or both of asparaginyl-tRNA or glutaminyl-tRNA synthetases. The reaction takes place in the presence of glutamine and ATP through an activated phospho-Asp-tRNA(Asn) or phospho-Glu-tRNA(Gln).</text>
</comment>
<comment type="catalytic activity">
    <reaction evidence="1">
        <text>L-glutamyl-tRNA(Gln) + L-glutamine + ATP + H2O = L-glutaminyl-tRNA(Gln) + L-glutamate + ADP + phosphate + H(+)</text>
        <dbReference type="Rhea" id="RHEA:17521"/>
        <dbReference type="Rhea" id="RHEA-COMP:9681"/>
        <dbReference type="Rhea" id="RHEA-COMP:9684"/>
        <dbReference type="ChEBI" id="CHEBI:15377"/>
        <dbReference type="ChEBI" id="CHEBI:15378"/>
        <dbReference type="ChEBI" id="CHEBI:29985"/>
        <dbReference type="ChEBI" id="CHEBI:30616"/>
        <dbReference type="ChEBI" id="CHEBI:43474"/>
        <dbReference type="ChEBI" id="CHEBI:58359"/>
        <dbReference type="ChEBI" id="CHEBI:78520"/>
        <dbReference type="ChEBI" id="CHEBI:78521"/>
        <dbReference type="ChEBI" id="CHEBI:456216"/>
    </reaction>
</comment>
<comment type="catalytic activity">
    <reaction evidence="1">
        <text>L-aspartyl-tRNA(Asn) + L-glutamine + ATP + H2O = L-asparaginyl-tRNA(Asn) + L-glutamate + ADP + phosphate + 2 H(+)</text>
        <dbReference type="Rhea" id="RHEA:14513"/>
        <dbReference type="Rhea" id="RHEA-COMP:9674"/>
        <dbReference type="Rhea" id="RHEA-COMP:9677"/>
        <dbReference type="ChEBI" id="CHEBI:15377"/>
        <dbReference type="ChEBI" id="CHEBI:15378"/>
        <dbReference type="ChEBI" id="CHEBI:29985"/>
        <dbReference type="ChEBI" id="CHEBI:30616"/>
        <dbReference type="ChEBI" id="CHEBI:43474"/>
        <dbReference type="ChEBI" id="CHEBI:58359"/>
        <dbReference type="ChEBI" id="CHEBI:78515"/>
        <dbReference type="ChEBI" id="CHEBI:78516"/>
        <dbReference type="ChEBI" id="CHEBI:456216"/>
    </reaction>
</comment>
<comment type="subunit">
    <text evidence="1">Heterotrimer of A, B and C subunits.</text>
</comment>
<comment type="similarity">
    <text evidence="1">Belongs to the GatB/GatE family. GatB subfamily.</text>
</comment>
<evidence type="ECO:0000255" key="1">
    <source>
        <dbReference type="HAMAP-Rule" id="MF_00121"/>
    </source>
</evidence>
<feature type="chain" id="PRO_1000016000" description="Aspartyl/glutamyl-tRNA(Asn/Gln) amidotransferase subunit B">
    <location>
        <begin position="1"/>
        <end position="509"/>
    </location>
</feature>
<protein>
    <recommendedName>
        <fullName evidence="1">Aspartyl/glutamyl-tRNA(Asn/Gln) amidotransferase subunit B</fullName>
        <shortName evidence="1">Asp/Glu-ADT subunit B</shortName>
        <ecNumber evidence="1">6.3.5.-</ecNumber>
    </recommendedName>
</protein>